<keyword id="KW-0963">Cytoplasm</keyword>
<keyword id="KW-0255">Endonuclease</keyword>
<keyword id="KW-0378">Hydrolase</keyword>
<keyword id="KW-0460">Magnesium</keyword>
<keyword id="KW-0479">Metal-binding</keyword>
<keyword id="KW-0507">mRNA processing</keyword>
<keyword id="KW-0540">Nuclease</keyword>
<keyword id="KW-0694">RNA-binding</keyword>
<keyword id="KW-0698">rRNA processing</keyword>
<keyword id="KW-0699">rRNA-binding</keyword>
<keyword id="KW-0819">tRNA processing</keyword>
<evidence type="ECO:0000255" key="1">
    <source>
        <dbReference type="HAMAP-Rule" id="MF_00104"/>
    </source>
</evidence>
<evidence type="ECO:0000256" key="2">
    <source>
        <dbReference type="SAM" id="MobiDB-lite"/>
    </source>
</evidence>
<feature type="chain" id="PRO_1000118930" description="Ribonuclease 3">
    <location>
        <begin position="1"/>
        <end position="237"/>
    </location>
</feature>
<feature type="domain" description="RNase III" evidence="1">
    <location>
        <begin position="5"/>
        <end position="136"/>
    </location>
</feature>
<feature type="domain" description="DRBM" evidence="1">
    <location>
        <begin position="163"/>
        <end position="232"/>
    </location>
</feature>
<feature type="region of interest" description="Disordered" evidence="2">
    <location>
        <begin position="185"/>
        <end position="237"/>
    </location>
</feature>
<feature type="compositionally biased region" description="Basic and acidic residues" evidence="2">
    <location>
        <begin position="185"/>
        <end position="208"/>
    </location>
</feature>
<feature type="compositionally biased region" description="Low complexity" evidence="2">
    <location>
        <begin position="216"/>
        <end position="231"/>
    </location>
</feature>
<feature type="active site" evidence="1">
    <location>
        <position position="53"/>
    </location>
</feature>
<feature type="active site" evidence="1">
    <location>
        <position position="125"/>
    </location>
</feature>
<feature type="binding site" evidence="1">
    <location>
        <position position="49"/>
    </location>
    <ligand>
        <name>Mg(2+)</name>
        <dbReference type="ChEBI" id="CHEBI:18420"/>
    </ligand>
</feature>
<feature type="binding site" evidence="1">
    <location>
        <position position="122"/>
    </location>
    <ligand>
        <name>Mg(2+)</name>
        <dbReference type="ChEBI" id="CHEBI:18420"/>
    </ligand>
</feature>
<feature type="binding site" evidence="1">
    <location>
        <position position="125"/>
    </location>
    <ligand>
        <name>Mg(2+)</name>
        <dbReference type="ChEBI" id="CHEBI:18420"/>
    </ligand>
</feature>
<proteinExistence type="inferred from homology"/>
<protein>
    <recommendedName>
        <fullName evidence="1">Ribonuclease 3</fullName>
        <ecNumber evidence="1">3.1.26.3</ecNumber>
    </recommendedName>
    <alternativeName>
        <fullName evidence="1">Ribonuclease III</fullName>
        <shortName evidence="1">RNase III</shortName>
    </alternativeName>
</protein>
<organism>
    <name type="scientific">Roseiflexus sp. (strain RS-1)</name>
    <dbReference type="NCBI Taxonomy" id="357808"/>
    <lineage>
        <taxon>Bacteria</taxon>
        <taxon>Bacillati</taxon>
        <taxon>Chloroflexota</taxon>
        <taxon>Chloroflexia</taxon>
        <taxon>Chloroflexales</taxon>
        <taxon>Roseiflexineae</taxon>
        <taxon>Roseiflexaceae</taxon>
        <taxon>Roseiflexus</taxon>
    </lineage>
</organism>
<reference key="1">
    <citation type="submission" date="2007-04" db="EMBL/GenBank/DDBJ databases">
        <title>Complete sequence of Roseiflexus sp. RS-1.</title>
        <authorList>
            <consortium name="US DOE Joint Genome Institute"/>
            <person name="Copeland A."/>
            <person name="Lucas S."/>
            <person name="Lapidus A."/>
            <person name="Barry K."/>
            <person name="Detter J.C."/>
            <person name="Glavina del Rio T."/>
            <person name="Hammon N."/>
            <person name="Israni S."/>
            <person name="Dalin E."/>
            <person name="Tice H."/>
            <person name="Pitluck S."/>
            <person name="Chertkov O."/>
            <person name="Brettin T."/>
            <person name="Bruce D."/>
            <person name="Han C."/>
            <person name="Schmutz J."/>
            <person name="Larimer F."/>
            <person name="Land M."/>
            <person name="Hauser L."/>
            <person name="Kyrpides N."/>
            <person name="Mikhailova N."/>
            <person name="Bryant D.A."/>
            <person name="Richardson P."/>
        </authorList>
    </citation>
    <scope>NUCLEOTIDE SEQUENCE [LARGE SCALE GENOMIC DNA]</scope>
    <source>
        <strain>RS-1</strain>
    </source>
</reference>
<gene>
    <name evidence="1" type="primary">rnc</name>
    <name type="ordered locus">RoseRS_4602</name>
</gene>
<dbReference type="EC" id="3.1.26.3" evidence="1"/>
<dbReference type="EMBL" id="CP000686">
    <property type="protein sequence ID" value="ABQ92933.1"/>
    <property type="molecule type" value="Genomic_DNA"/>
</dbReference>
<dbReference type="RefSeq" id="WP_011959270.1">
    <property type="nucleotide sequence ID" value="NC_009523.1"/>
</dbReference>
<dbReference type="SMR" id="A5V230"/>
<dbReference type="STRING" id="357808.RoseRS_4602"/>
<dbReference type="KEGG" id="rrs:RoseRS_4602"/>
<dbReference type="eggNOG" id="COG0571">
    <property type="taxonomic scope" value="Bacteria"/>
</dbReference>
<dbReference type="HOGENOM" id="CLU_000907_1_3_0"/>
<dbReference type="OrthoDB" id="9805026at2"/>
<dbReference type="Proteomes" id="UP000006554">
    <property type="component" value="Chromosome"/>
</dbReference>
<dbReference type="GO" id="GO:0005737">
    <property type="term" value="C:cytoplasm"/>
    <property type="evidence" value="ECO:0007669"/>
    <property type="project" value="UniProtKB-SubCell"/>
</dbReference>
<dbReference type="GO" id="GO:0003725">
    <property type="term" value="F:double-stranded RNA binding"/>
    <property type="evidence" value="ECO:0007669"/>
    <property type="project" value="TreeGrafter"/>
</dbReference>
<dbReference type="GO" id="GO:0046872">
    <property type="term" value="F:metal ion binding"/>
    <property type="evidence" value="ECO:0007669"/>
    <property type="project" value="UniProtKB-KW"/>
</dbReference>
<dbReference type="GO" id="GO:0004525">
    <property type="term" value="F:ribonuclease III activity"/>
    <property type="evidence" value="ECO:0007669"/>
    <property type="project" value="UniProtKB-UniRule"/>
</dbReference>
<dbReference type="GO" id="GO:0019843">
    <property type="term" value="F:rRNA binding"/>
    <property type="evidence" value="ECO:0007669"/>
    <property type="project" value="UniProtKB-KW"/>
</dbReference>
<dbReference type="GO" id="GO:0006397">
    <property type="term" value="P:mRNA processing"/>
    <property type="evidence" value="ECO:0007669"/>
    <property type="project" value="UniProtKB-UniRule"/>
</dbReference>
<dbReference type="GO" id="GO:0010468">
    <property type="term" value="P:regulation of gene expression"/>
    <property type="evidence" value="ECO:0007669"/>
    <property type="project" value="TreeGrafter"/>
</dbReference>
<dbReference type="GO" id="GO:0006364">
    <property type="term" value="P:rRNA processing"/>
    <property type="evidence" value="ECO:0007669"/>
    <property type="project" value="UniProtKB-UniRule"/>
</dbReference>
<dbReference type="GO" id="GO:0008033">
    <property type="term" value="P:tRNA processing"/>
    <property type="evidence" value="ECO:0007669"/>
    <property type="project" value="UniProtKB-KW"/>
</dbReference>
<dbReference type="CDD" id="cd10845">
    <property type="entry name" value="DSRM_RNAse_III_family"/>
    <property type="match status" value="1"/>
</dbReference>
<dbReference type="CDD" id="cd00593">
    <property type="entry name" value="RIBOc"/>
    <property type="match status" value="1"/>
</dbReference>
<dbReference type="FunFam" id="1.10.1520.10:FF:000001">
    <property type="entry name" value="Ribonuclease 3"/>
    <property type="match status" value="1"/>
</dbReference>
<dbReference type="Gene3D" id="3.30.160.20">
    <property type="match status" value="1"/>
</dbReference>
<dbReference type="Gene3D" id="1.10.1520.10">
    <property type="entry name" value="Ribonuclease III domain"/>
    <property type="match status" value="1"/>
</dbReference>
<dbReference type="HAMAP" id="MF_00104">
    <property type="entry name" value="RNase_III"/>
    <property type="match status" value="1"/>
</dbReference>
<dbReference type="InterPro" id="IPR014720">
    <property type="entry name" value="dsRBD_dom"/>
</dbReference>
<dbReference type="InterPro" id="IPR011907">
    <property type="entry name" value="RNase_III"/>
</dbReference>
<dbReference type="InterPro" id="IPR000999">
    <property type="entry name" value="RNase_III_dom"/>
</dbReference>
<dbReference type="InterPro" id="IPR036389">
    <property type="entry name" value="RNase_III_sf"/>
</dbReference>
<dbReference type="NCBIfam" id="TIGR02191">
    <property type="entry name" value="RNaseIII"/>
    <property type="match status" value="1"/>
</dbReference>
<dbReference type="PANTHER" id="PTHR11207:SF0">
    <property type="entry name" value="RIBONUCLEASE 3"/>
    <property type="match status" value="1"/>
</dbReference>
<dbReference type="PANTHER" id="PTHR11207">
    <property type="entry name" value="RIBONUCLEASE III"/>
    <property type="match status" value="1"/>
</dbReference>
<dbReference type="Pfam" id="PF00035">
    <property type="entry name" value="dsrm"/>
    <property type="match status" value="1"/>
</dbReference>
<dbReference type="Pfam" id="PF14622">
    <property type="entry name" value="Ribonucleas_3_3"/>
    <property type="match status" value="1"/>
</dbReference>
<dbReference type="SMART" id="SM00358">
    <property type="entry name" value="DSRM"/>
    <property type="match status" value="1"/>
</dbReference>
<dbReference type="SMART" id="SM00535">
    <property type="entry name" value="RIBOc"/>
    <property type="match status" value="1"/>
</dbReference>
<dbReference type="SUPFAM" id="SSF54768">
    <property type="entry name" value="dsRNA-binding domain-like"/>
    <property type="match status" value="1"/>
</dbReference>
<dbReference type="SUPFAM" id="SSF69065">
    <property type="entry name" value="RNase III domain-like"/>
    <property type="match status" value="1"/>
</dbReference>
<dbReference type="PROSITE" id="PS50137">
    <property type="entry name" value="DS_RBD"/>
    <property type="match status" value="1"/>
</dbReference>
<dbReference type="PROSITE" id="PS00517">
    <property type="entry name" value="RNASE_3_1"/>
    <property type="match status" value="1"/>
</dbReference>
<dbReference type="PROSITE" id="PS50142">
    <property type="entry name" value="RNASE_3_2"/>
    <property type="match status" value="1"/>
</dbReference>
<name>RNC_ROSS1</name>
<comment type="function">
    <text evidence="1">Digests double-stranded RNA. Involved in the processing of primary rRNA transcript to yield the immediate precursors to the large and small rRNAs (23S and 16S). Processes some mRNAs, and tRNAs when they are encoded in the rRNA operon. Processes pre-crRNA and tracrRNA of type II CRISPR loci if present in the organism.</text>
</comment>
<comment type="catalytic activity">
    <reaction evidence="1">
        <text>Endonucleolytic cleavage to 5'-phosphomonoester.</text>
        <dbReference type="EC" id="3.1.26.3"/>
    </reaction>
</comment>
<comment type="cofactor">
    <cofactor evidence="1">
        <name>Mg(2+)</name>
        <dbReference type="ChEBI" id="CHEBI:18420"/>
    </cofactor>
</comment>
<comment type="subunit">
    <text evidence="1">Homodimer.</text>
</comment>
<comment type="subcellular location">
    <subcellularLocation>
        <location evidence="1">Cytoplasm</location>
    </subcellularLocation>
</comment>
<comment type="similarity">
    <text evidence="1">Belongs to the ribonuclease III family.</text>
</comment>
<accession>A5V230</accession>
<sequence>MRKSVDELSARLGVTFSDQRLLEQALTHSSFLNEHVEERMHLDSNERLEFLGDAIINFLAARLVFERFPDAGEGELTAWRTALIRTETLAGFAQRYNLGAYVLLARGEESSGARQRQALLADTFEAVIAALFLDQGLNAVRTFLLPLFEAELASLPDRTLPVDYKSRLQARIQAERRVTPRYHEIDRSGPEHRPEFTVEVRAGEERLGTGKGPSKQAAEQAAARAALDALEGGTDGR</sequence>